<name>CCDA2_ORYSJ</name>
<proteinExistence type="inferred from homology"/>
<evidence type="ECO:0000250" key="1"/>
<evidence type="ECO:0000255" key="2"/>
<evidence type="ECO:0000256" key="3">
    <source>
        <dbReference type="SAM" id="MobiDB-lite"/>
    </source>
</evidence>
<evidence type="ECO:0000305" key="4"/>
<keyword id="KW-0150">Chloroplast</keyword>
<keyword id="KW-0201">Cytochrome c-type biogenesis</keyword>
<keyword id="KW-0249">Electron transport</keyword>
<keyword id="KW-0472">Membrane</keyword>
<keyword id="KW-0934">Plastid</keyword>
<keyword id="KW-1185">Reference proteome</keyword>
<keyword id="KW-0793">Thylakoid</keyword>
<keyword id="KW-0809">Transit peptide</keyword>
<keyword id="KW-0812">Transmembrane</keyword>
<keyword id="KW-1133">Transmembrane helix</keyword>
<keyword id="KW-0813">Transport</keyword>
<comment type="function">
    <text evidence="1">Probably involved in the transfer of reducing equivalents from stroma to thylakoid lumen and required for the biogenesis of the plastid cytochrome b6f complex.</text>
</comment>
<comment type="subcellular location">
    <subcellularLocation>
        <location evidence="1">Plastid</location>
        <location evidence="1">Chloroplast thylakoid membrane</location>
        <topology>Multi-pass membrane protein</topology>
    </subcellularLocation>
</comment>
<comment type="similarity">
    <text evidence="4">Belongs to the DsbD family.</text>
</comment>
<comment type="sequence caution" evidence="4">
    <conflict type="erroneous gene model prediction">
        <sequence resource="EMBL-CDS" id="ABA95764"/>
    </conflict>
</comment>
<comment type="sequence caution" evidence="4">
    <conflict type="erroneous gene model prediction">
        <sequence resource="EMBL-CDS" id="BAH95508"/>
    </conflict>
</comment>
<dbReference type="EMBL" id="DP000011">
    <property type="protein sequence ID" value="ABA95763.1"/>
    <property type="molecule type" value="Genomic_DNA"/>
</dbReference>
<dbReference type="EMBL" id="DP000011">
    <property type="protein sequence ID" value="ABA95764.1"/>
    <property type="status" value="ALT_SEQ"/>
    <property type="molecule type" value="Genomic_DNA"/>
</dbReference>
<dbReference type="EMBL" id="AP008218">
    <property type="protein sequence ID" value="BAH95508.1"/>
    <property type="status" value="ALT_SEQ"/>
    <property type="molecule type" value="Genomic_DNA"/>
</dbReference>
<dbReference type="EMBL" id="AP014968">
    <property type="status" value="NOT_ANNOTATED_CDS"/>
    <property type="molecule type" value="Genomic_DNA"/>
</dbReference>
<dbReference type="RefSeq" id="XP_015620194.1">
    <property type="nucleotide sequence ID" value="XM_015764708.1"/>
</dbReference>
<dbReference type="FunCoup" id="Q2QY07">
    <property type="interactions" value="123"/>
</dbReference>
<dbReference type="STRING" id="39947.Q2QY07"/>
<dbReference type="PaxDb" id="39947-Q2QY07"/>
<dbReference type="KEGG" id="dosa:Os12g0137300"/>
<dbReference type="InParanoid" id="Q2QY07"/>
<dbReference type="OrthoDB" id="40974at2759"/>
<dbReference type="Proteomes" id="UP000000763">
    <property type="component" value="Chromosome 12"/>
</dbReference>
<dbReference type="Proteomes" id="UP000059680">
    <property type="component" value="Chromosome 12"/>
</dbReference>
<dbReference type="GO" id="GO:0009535">
    <property type="term" value="C:chloroplast thylakoid membrane"/>
    <property type="evidence" value="ECO:0007669"/>
    <property type="project" value="UniProtKB-SubCell"/>
</dbReference>
<dbReference type="GO" id="GO:0017004">
    <property type="term" value="P:cytochrome complex assembly"/>
    <property type="evidence" value="ECO:0007669"/>
    <property type="project" value="UniProtKB-KW"/>
</dbReference>
<dbReference type="InterPro" id="IPR003834">
    <property type="entry name" value="Cyt_c_assmbl_TM_dom"/>
</dbReference>
<dbReference type="InterPro" id="IPR051790">
    <property type="entry name" value="Cytochrome_c-biogenesis_DsbD"/>
</dbReference>
<dbReference type="PANTHER" id="PTHR31272:SF6">
    <property type="entry name" value="CYTOCHROME C-TYPE BIOGENESIS CCDA-LIKE CHLOROPLASTIC PROTEIN"/>
    <property type="match status" value="1"/>
</dbReference>
<dbReference type="PANTHER" id="PTHR31272">
    <property type="entry name" value="CYTOCHROME C-TYPE BIOGENESIS PROTEIN HI_1454-RELATED"/>
    <property type="match status" value="1"/>
</dbReference>
<dbReference type="Pfam" id="PF02683">
    <property type="entry name" value="DsbD_TM"/>
    <property type="match status" value="1"/>
</dbReference>
<feature type="transit peptide" description="Chloroplast" evidence="2">
    <location>
        <begin position="1"/>
        <end position="63"/>
    </location>
</feature>
<feature type="chain" id="PRO_0000394854" description="Cytochrome c-type biogenesis ccda-like chloroplastic protein 2">
    <location>
        <begin position="64"/>
        <end position="362"/>
    </location>
</feature>
<feature type="transmembrane region" description="Helical" evidence="2">
    <location>
        <begin position="71"/>
        <end position="91"/>
    </location>
</feature>
<feature type="transmembrane region" description="Helical" evidence="2">
    <location>
        <begin position="97"/>
        <end position="117"/>
    </location>
</feature>
<feature type="transmembrane region" description="Helical" evidence="2">
    <location>
        <begin position="143"/>
        <end position="165"/>
    </location>
</feature>
<feature type="transmembrane region" description="Helical" evidence="2">
    <location>
        <begin position="185"/>
        <end position="205"/>
    </location>
</feature>
<feature type="transmembrane region" description="Helical" evidence="2">
    <location>
        <begin position="215"/>
        <end position="235"/>
    </location>
</feature>
<feature type="transmembrane region" description="Helical" evidence="2">
    <location>
        <begin position="268"/>
        <end position="288"/>
    </location>
</feature>
<feature type="transmembrane region" description="Helical" evidence="2">
    <location>
        <begin position="294"/>
        <end position="314"/>
    </location>
</feature>
<feature type="transmembrane region" description="Helical" evidence="2">
    <location>
        <begin position="331"/>
        <end position="351"/>
    </location>
</feature>
<feature type="region of interest" description="Disordered" evidence="3">
    <location>
        <begin position="1"/>
        <end position="41"/>
    </location>
</feature>
<feature type="compositionally biased region" description="Polar residues" evidence="3">
    <location>
        <begin position="1"/>
        <end position="13"/>
    </location>
</feature>
<feature type="compositionally biased region" description="Low complexity" evidence="3">
    <location>
        <begin position="21"/>
        <end position="40"/>
    </location>
</feature>
<gene>
    <name type="primary">CCDA2</name>
    <name type="ordered locus">Os12g0137300</name>
    <name type="ordered locus">LOC_Os12g04270</name>
</gene>
<organism>
    <name type="scientific">Oryza sativa subsp. japonica</name>
    <name type="common">Rice</name>
    <dbReference type="NCBI Taxonomy" id="39947"/>
    <lineage>
        <taxon>Eukaryota</taxon>
        <taxon>Viridiplantae</taxon>
        <taxon>Streptophyta</taxon>
        <taxon>Embryophyta</taxon>
        <taxon>Tracheophyta</taxon>
        <taxon>Spermatophyta</taxon>
        <taxon>Magnoliopsida</taxon>
        <taxon>Liliopsida</taxon>
        <taxon>Poales</taxon>
        <taxon>Poaceae</taxon>
        <taxon>BOP clade</taxon>
        <taxon>Oryzoideae</taxon>
        <taxon>Oryzeae</taxon>
        <taxon>Oryzinae</taxon>
        <taxon>Oryza</taxon>
        <taxon>Oryza sativa</taxon>
    </lineage>
</organism>
<reference key="1">
    <citation type="journal article" date="2005" name="BMC Biol.">
        <title>The sequence of rice chromosomes 11 and 12, rich in disease resistance genes and recent gene duplications.</title>
        <authorList>
            <consortium name="The rice chromosomes 11 and 12 sequencing consortia"/>
        </authorList>
    </citation>
    <scope>NUCLEOTIDE SEQUENCE [LARGE SCALE GENOMIC DNA]</scope>
    <source>
        <strain>cv. Nipponbare</strain>
    </source>
</reference>
<reference key="2">
    <citation type="journal article" date="2005" name="Nature">
        <title>The map-based sequence of the rice genome.</title>
        <authorList>
            <consortium name="International rice genome sequencing project (IRGSP)"/>
        </authorList>
    </citation>
    <scope>NUCLEOTIDE SEQUENCE [LARGE SCALE GENOMIC DNA]</scope>
    <source>
        <strain>cv. Nipponbare</strain>
    </source>
</reference>
<reference key="3">
    <citation type="journal article" date="2008" name="Nucleic Acids Res.">
        <title>The rice annotation project database (RAP-DB): 2008 update.</title>
        <authorList>
            <consortium name="The rice annotation project (RAP)"/>
        </authorList>
    </citation>
    <scope>GENOME REANNOTATION</scope>
    <source>
        <strain>cv. Nipponbare</strain>
    </source>
</reference>
<reference key="4">
    <citation type="journal article" date="2013" name="Rice">
        <title>Improvement of the Oryza sativa Nipponbare reference genome using next generation sequence and optical map data.</title>
        <authorList>
            <person name="Kawahara Y."/>
            <person name="de la Bastide M."/>
            <person name="Hamilton J.P."/>
            <person name="Kanamori H."/>
            <person name="McCombie W.R."/>
            <person name="Ouyang S."/>
            <person name="Schwartz D.C."/>
            <person name="Tanaka T."/>
            <person name="Wu J."/>
            <person name="Zhou S."/>
            <person name="Childs K.L."/>
            <person name="Davidson R.M."/>
            <person name="Lin H."/>
            <person name="Quesada-Ocampo L."/>
            <person name="Vaillancourt B."/>
            <person name="Sakai H."/>
            <person name="Lee S.S."/>
            <person name="Kim J."/>
            <person name="Numa H."/>
            <person name="Itoh T."/>
            <person name="Buell C.R."/>
            <person name="Matsumoto T."/>
        </authorList>
    </citation>
    <scope>GENOME REANNOTATION</scope>
    <source>
        <strain>cv. Nipponbare</strain>
    </source>
</reference>
<accession>Q2QY07</accession>
<accession>C7JA67</accession>
<accession>Q2QY06</accession>
<protein>
    <recommendedName>
        <fullName>Cytochrome c-type biogenesis ccda-like chloroplastic protein 2</fullName>
    </recommendedName>
    <alternativeName>
        <fullName>Cytochrome b6f biogenesis protein CCDA2</fullName>
    </alternativeName>
</protein>
<sequence length="362" mass="36518">MAARPVSSTTSTCRPCRPAQAAASKPSTSSSPGTGVLVGVPRERGSSVSKAAIRGARLEAAARCSLVRQRPMLLATVAVGSLVAAGAANATEIGDSLLGSSGLALADLSIGDWFGNLLYSAGQQANEAVQDQLSALSFTSLAVIFGAGLVTSLSPCTLSVLPLTLGYIGAFGSGKDRSEVVGNSVAFSLGLATTLAILGVAASFAGKAYGQVGQGLPVAASGLAVIMGLNLLEVIELQLPSFFSDYDPRAAAANLPSSVQAYLAGLTFALAASPCSTPVLATLLGYVATSRDPIVGGSLLLTYTTGYVAPLLIAASFAGALQSLLSFRRYSAWINPISGAFLLGGGVYTLLDRLFPATSMVM</sequence>